<name>RL27_HAEIG</name>
<feature type="chain" id="PRO_1000017492" description="Large ribosomal subunit protein bL27">
    <location>
        <begin position="1"/>
        <end position="85"/>
    </location>
</feature>
<feature type="region of interest" description="Disordered" evidence="2">
    <location>
        <begin position="1"/>
        <end position="20"/>
    </location>
</feature>
<keyword id="KW-0687">Ribonucleoprotein</keyword>
<keyword id="KW-0689">Ribosomal protein</keyword>
<protein>
    <recommendedName>
        <fullName evidence="1">Large ribosomal subunit protein bL27</fullName>
    </recommendedName>
    <alternativeName>
        <fullName evidence="3">50S ribosomal protein L27</fullName>
    </alternativeName>
</protein>
<gene>
    <name evidence="1" type="primary">rpmA</name>
    <name type="ordered locus">CGSHiGG_07940</name>
</gene>
<accession>A5UI24</accession>
<organism>
    <name type="scientific">Haemophilus influenzae (strain PittGG)</name>
    <dbReference type="NCBI Taxonomy" id="374931"/>
    <lineage>
        <taxon>Bacteria</taxon>
        <taxon>Pseudomonadati</taxon>
        <taxon>Pseudomonadota</taxon>
        <taxon>Gammaproteobacteria</taxon>
        <taxon>Pasteurellales</taxon>
        <taxon>Pasteurellaceae</taxon>
        <taxon>Haemophilus</taxon>
    </lineage>
</organism>
<sequence length="85" mass="9139">MATKKAGGSTRNGRDSEAKRLGVKRFGGESVLAGSIIVRQRGTKFHAGNNVGMGRDHTLFATADGKVKFEVKGEKSRKYVSIVTE</sequence>
<proteinExistence type="inferred from homology"/>
<comment type="similarity">
    <text evidence="1">Belongs to the bacterial ribosomal protein bL27 family.</text>
</comment>
<evidence type="ECO:0000255" key="1">
    <source>
        <dbReference type="HAMAP-Rule" id="MF_00539"/>
    </source>
</evidence>
<evidence type="ECO:0000256" key="2">
    <source>
        <dbReference type="SAM" id="MobiDB-lite"/>
    </source>
</evidence>
<evidence type="ECO:0000305" key="3"/>
<reference key="1">
    <citation type="journal article" date="2007" name="Genome Biol.">
        <title>Characterization and modeling of the Haemophilus influenzae core and supragenomes based on the complete genomic sequences of Rd and 12 clinical nontypeable strains.</title>
        <authorList>
            <person name="Hogg J.S."/>
            <person name="Hu F.Z."/>
            <person name="Janto B."/>
            <person name="Boissy R."/>
            <person name="Hayes J."/>
            <person name="Keefe R."/>
            <person name="Post J.C."/>
            <person name="Ehrlich G.D."/>
        </authorList>
    </citation>
    <scope>NUCLEOTIDE SEQUENCE [LARGE SCALE GENOMIC DNA]</scope>
    <source>
        <strain>PittGG</strain>
    </source>
</reference>
<dbReference type="EMBL" id="CP000672">
    <property type="protein sequence ID" value="ABR00430.1"/>
    <property type="molecule type" value="Genomic_DNA"/>
</dbReference>
<dbReference type="SMR" id="A5UI24"/>
<dbReference type="KEGG" id="hiq:CGSHiGG_07940"/>
<dbReference type="HOGENOM" id="CLU_095424_4_1_6"/>
<dbReference type="Proteomes" id="UP000001990">
    <property type="component" value="Chromosome"/>
</dbReference>
<dbReference type="GO" id="GO:0022625">
    <property type="term" value="C:cytosolic large ribosomal subunit"/>
    <property type="evidence" value="ECO:0007669"/>
    <property type="project" value="TreeGrafter"/>
</dbReference>
<dbReference type="GO" id="GO:0003735">
    <property type="term" value="F:structural constituent of ribosome"/>
    <property type="evidence" value="ECO:0007669"/>
    <property type="project" value="InterPro"/>
</dbReference>
<dbReference type="GO" id="GO:0006412">
    <property type="term" value="P:translation"/>
    <property type="evidence" value="ECO:0007669"/>
    <property type="project" value="UniProtKB-UniRule"/>
</dbReference>
<dbReference type="FunFam" id="2.40.50.100:FF:000001">
    <property type="entry name" value="50S ribosomal protein L27"/>
    <property type="match status" value="1"/>
</dbReference>
<dbReference type="Gene3D" id="2.40.50.100">
    <property type="match status" value="1"/>
</dbReference>
<dbReference type="HAMAP" id="MF_00539">
    <property type="entry name" value="Ribosomal_bL27"/>
    <property type="match status" value="1"/>
</dbReference>
<dbReference type="InterPro" id="IPR001684">
    <property type="entry name" value="Ribosomal_bL27"/>
</dbReference>
<dbReference type="InterPro" id="IPR018261">
    <property type="entry name" value="Ribosomal_bL27_CS"/>
</dbReference>
<dbReference type="NCBIfam" id="TIGR00062">
    <property type="entry name" value="L27"/>
    <property type="match status" value="1"/>
</dbReference>
<dbReference type="PANTHER" id="PTHR15893:SF0">
    <property type="entry name" value="LARGE RIBOSOMAL SUBUNIT PROTEIN BL27M"/>
    <property type="match status" value="1"/>
</dbReference>
<dbReference type="PANTHER" id="PTHR15893">
    <property type="entry name" value="RIBOSOMAL PROTEIN L27"/>
    <property type="match status" value="1"/>
</dbReference>
<dbReference type="Pfam" id="PF01016">
    <property type="entry name" value="Ribosomal_L27"/>
    <property type="match status" value="1"/>
</dbReference>
<dbReference type="PRINTS" id="PR00063">
    <property type="entry name" value="RIBOSOMALL27"/>
</dbReference>
<dbReference type="SUPFAM" id="SSF110324">
    <property type="entry name" value="Ribosomal L27 protein-like"/>
    <property type="match status" value="1"/>
</dbReference>
<dbReference type="PROSITE" id="PS00831">
    <property type="entry name" value="RIBOSOMAL_L27"/>
    <property type="match status" value="1"/>
</dbReference>